<sequence>MATVKVTLIKSVSGRIPNHKLCVKGLGLRRIGHTVEVQDTPENRGMINKAYYMLRVEG</sequence>
<proteinExistence type="inferred from homology"/>
<comment type="subunit">
    <text evidence="1">Part of the 50S ribosomal subunit.</text>
</comment>
<comment type="similarity">
    <text evidence="1">Belongs to the universal ribosomal protein uL30 family.</text>
</comment>
<gene>
    <name evidence="1" type="primary">rpmD</name>
    <name type="ordered locus">PputW619_4731</name>
</gene>
<name>RL30_PSEPW</name>
<keyword id="KW-0687">Ribonucleoprotein</keyword>
<keyword id="KW-0689">Ribosomal protein</keyword>
<feature type="chain" id="PRO_1000144705" description="Large ribosomal subunit protein uL30">
    <location>
        <begin position="1"/>
        <end position="58"/>
    </location>
</feature>
<dbReference type="EMBL" id="CP000949">
    <property type="protein sequence ID" value="ACA75207.1"/>
    <property type="molecule type" value="Genomic_DNA"/>
</dbReference>
<dbReference type="SMR" id="B1JAJ4"/>
<dbReference type="STRING" id="390235.PputW619_4731"/>
<dbReference type="KEGG" id="ppw:PputW619_4731"/>
<dbReference type="eggNOG" id="COG1841">
    <property type="taxonomic scope" value="Bacteria"/>
</dbReference>
<dbReference type="HOGENOM" id="CLU_131047_1_4_6"/>
<dbReference type="OrthoDB" id="9812790at2"/>
<dbReference type="GO" id="GO:0022625">
    <property type="term" value="C:cytosolic large ribosomal subunit"/>
    <property type="evidence" value="ECO:0007669"/>
    <property type="project" value="TreeGrafter"/>
</dbReference>
<dbReference type="GO" id="GO:0003735">
    <property type="term" value="F:structural constituent of ribosome"/>
    <property type="evidence" value="ECO:0007669"/>
    <property type="project" value="InterPro"/>
</dbReference>
<dbReference type="GO" id="GO:0006412">
    <property type="term" value="P:translation"/>
    <property type="evidence" value="ECO:0007669"/>
    <property type="project" value="UniProtKB-UniRule"/>
</dbReference>
<dbReference type="CDD" id="cd01658">
    <property type="entry name" value="Ribosomal_L30"/>
    <property type="match status" value="1"/>
</dbReference>
<dbReference type="FunFam" id="3.30.1390.20:FF:000001">
    <property type="entry name" value="50S ribosomal protein L30"/>
    <property type="match status" value="1"/>
</dbReference>
<dbReference type="Gene3D" id="3.30.1390.20">
    <property type="entry name" value="Ribosomal protein L30, ferredoxin-like fold domain"/>
    <property type="match status" value="1"/>
</dbReference>
<dbReference type="HAMAP" id="MF_01371_B">
    <property type="entry name" value="Ribosomal_uL30_B"/>
    <property type="match status" value="1"/>
</dbReference>
<dbReference type="InterPro" id="IPR036919">
    <property type="entry name" value="Ribo_uL30_ferredoxin-like_sf"/>
</dbReference>
<dbReference type="InterPro" id="IPR005996">
    <property type="entry name" value="Ribosomal_uL30_bac-type"/>
</dbReference>
<dbReference type="InterPro" id="IPR016082">
    <property type="entry name" value="Ribosomal_uL30_ferredoxin-like"/>
</dbReference>
<dbReference type="NCBIfam" id="TIGR01308">
    <property type="entry name" value="rpmD_bact"/>
    <property type="match status" value="1"/>
</dbReference>
<dbReference type="PANTHER" id="PTHR15892:SF2">
    <property type="entry name" value="LARGE RIBOSOMAL SUBUNIT PROTEIN UL30M"/>
    <property type="match status" value="1"/>
</dbReference>
<dbReference type="PANTHER" id="PTHR15892">
    <property type="entry name" value="MITOCHONDRIAL RIBOSOMAL PROTEIN L30"/>
    <property type="match status" value="1"/>
</dbReference>
<dbReference type="Pfam" id="PF00327">
    <property type="entry name" value="Ribosomal_L30"/>
    <property type="match status" value="1"/>
</dbReference>
<dbReference type="PIRSF" id="PIRSF002211">
    <property type="entry name" value="Ribosomal_L30_bac-type"/>
    <property type="match status" value="1"/>
</dbReference>
<dbReference type="SUPFAM" id="SSF55129">
    <property type="entry name" value="Ribosomal protein L30p/L7e"/>
    <property type="match status" value="1"/>
</dbReference>
<organism>
    <name type="scientific">Pseudomonas putida (strain W619)</name>
    <dbReference type="NCBI Taxonomy" id="390235"/>
    <lineage>
        <taxon>Bacteria</taxon>
        <taxon>Pseudomonadati</taxon>
        <taxon>Pseudomonadota</taxon>
        <taxon>Gammaproteobacteria</taxon>
        <taxon>Pseudomonadales</taxon>
        <taxon>Pseudomonadaceae</taxon>
        <taxon>Pseudomonas</taxon>
    </lineage>
</organism>
<accession>B1JAJ4</accession>
<evidence type="ECO:0000255" key="1">
    <source>
        <dbReference type="HAMAP-Rule" id="MF_01371"/>
    </source>
</evidence>
<evidence type="ECO:0000305" key="2"/>
<protein>
    <recommendedName>
        <fullName evidence="1">Large ribosomal subunit protein uL30</fullName>
    </recommendedName>
    <alternativeName>
        <fullName evidence="2">50S ribosomal protein L30</fullName>
    </alternativeName>
</protein>
<reference key="1">
    <citation type="submission" date="2008-02" db="EMBL/GenBank/DDBJ databases">
        <title>Complete sequence of Pseudomonas putida W619.</title>
        <authorList>
            <person name="Copeland A."/>
            <person name="Lucas S."/>
            <person name="Lapidus A."/>
            <person name="Barry K."/>
            <person name="Detter J.C."/>
            <person name="Glavina del Rio T."/>
            <person name="Dalin E."/>
            <person name="Tice H."/>
            <person name="Pitluck S."/>
            <person name="Chain P."/>
            <person name="Malfatti S."/>
            <person name="Shin M."/>
            <person name="Vergez L."/>
            <person name="Schmutz J."/>
            <person name="Larimer F."/>
            <person name="Land M."/>
            <person name="Hauser L."/>
            <person name="Kyrpides N."/>
            <person name="Kim E."/>
            <person name="Taghavi S."/>
            <person name="Vangronsveld D."/>
            <person name="van der Lelie D."/>
            <person name="Richardson P."/>
        </authorList>
    </citation>
    <scope>NUCLEOTIDE SEQUENCE [LARGE SCALE GENOMIC DNA]</scope>
    <source>
        <strain>W619</strain>
    </source>
</reference>